<keyword id="KW-0193">Cuticle</keyword>
<keyword id="KW-0732">Signal</keyword>
<evidence type="ECO:0000250" key="1"/>
<evidence type="ECO:0000255" key="2">
    <source>
        <dbReference type="PROSITE-ProRule" id="PRU00497"/>
    </source>
</evidence>
<proteinExistence type="evidence at transcript level"/>
<sequence>MKSFIVALCVVGCVLANDPEAVVVRNDYVQNPEGSYNYAFESNNGISGQAEGKFKVFDKDSAAVVVAGSSQYKGSDGKVYSLTYVADENGYQPQADFLPTPPPTVAIPEYIARAVAYNLAHSAKV</sequence>
<comment type="function">
    <text>Component of the cuticle of the larva of tobacco hornworm.</text>
</comment>
<comment type="developmental stage">
    <text>Expressed throughout both the four and the fifth larval instars.</text>
</comment>
<gene>
    <name type="primary">LCP-14</name>
</gene>
<name>CU14_MANSE</name>
<dbReference type="EMBL" id="X13279">
    <property type="protein sequence ID" value="CAA31643.1"/>
    <property type="molecule type" value="mRNA"/>
</dbReference>
<dbReference type="EMBL" id="X13277">
    <property type="protein sequence ID" value="CAA31641.1"/>
    <property type="molecule type" value="Genomic_DNA"/>
</dbReference>
<dbReference type="EMBL" id="M18546">
    <property type="protein sequence ID" value="AAA29318.1"/>
    <property type="molecule type" value="mRNA"/>
</dbReference>
<dbReference type="EMBL" id="M26395">
    <property type="protein sequence ID" value="AAA29319.1"/>
    <property type="molecule type" value="Genomic_DNA"/>
</dbReference>
<dbReference type="EMBL" id="M26394">
    <property type="protein sequence ID" value="AAA29319.1"/>
    <property type="status" value="JOINED"/>
    <property type="molecule type" value="Genomic_DNA"/>
</dbReference>
<dbReference type="PIR" id="S01374">
    <property type="entry name" value="S01374"/>
</dbReference>
<dbReference type="EnsemblMetazoa" id="XM_030163708.2">
    <property type="protein sequence ID" value="XP_030019568.1"/>
    <property type="gene ID" value="LOC115439735"/>
</dbReference>
<dbReference type="OrthoDB" id="7920766at2759"/>
<dbReference type="GO" id="GO:0062129">
    <property type="term" value="C:chitin-based extracellular matrix"/>
    <property type="evidence" value="ECO:0007669"/>
    <property type="project" value="TreeGrafter"/>
</dbReference>
<dbReference type="GO" id="GO:0008010">
    <property type="term" value="F:structural constituent of chitin-based larval cuticle"/>
    <property type="evidence" value="ECO:0007669"/>
    <property type="project" value="TreeGrafter"/>
</dbReference>
<dbReference type="InterPro" id="IPR031311">
    <property type="entry name" value="CHIT_BIND_RR_consensus"/>
</dbReference>
<dbReference type="InterPro" id="IPR050468">
    <property type="entry name" value="Cuticle_Struct_Prot"/>
</dbReference>
<dbReference type="InterPro" id="IPR000618">
    <property type="entry name" value="Insect_cuticle"/>
</dbReference>
<dbReference type="PANTHER" id="PTHR10380">
    <property type="entry name" value="CUTICLE PROTEIN"/>
    <property type="match status" value="1"/>
</dbReference>
<dbReference type="PANTHER" id="PTHR10380:SF173">
    <property type="entry name" value="CUTICULAR PROTEIN 47EF, ISOFORM C-RELATED"/>
    <property type="match status" value="1"/>
</dbReference>
<dbReference type="Pfam" id="PF00379">
    <property type="entry name" value="Chitin_bind_4"/>
    <property type="match status" value="1"/>
</dbReference>
<dbReference type="PRINTS" id="PR00947">
    <property type="entry name" value="CUTICLE"/>
</dbReference>
<dbReference type="PROSITE" id="PS00233">
    <property type="entry name" value="CHIT_BIND_RR_1"/>
    <property type="match status" value="1"/>
</dbReference>
<dbReference type="PROSITE" id="PS51155">
    <property type="entry name" value="CHIT_BIND_RR_2"/>
    <property type="match status" value="1"/>
</dbReference>
<accession>P13229</accession>
<feature type="signal peptide" evidence="1">
    <location>
        <begin position="1"/>
        <end position="16"/>
    </location>
</feature>
<feature type="chain" id="PRO_0000006407" description="Larval cuticle protein LCP-14">
    <location>
        <begin position="17"/>
        <end position="125"/>
    </location>
</feature>
<feature type="domain" description="Chitin-binding type R&amp;R" evidence="2">
    <location>
        <begin position="33"/>
        <end position="102"/>
    </location>
</feature>
<feature type="sequence variant">
    <original>V</original>
    <variation>A</variation>
    <location>
        <position position="105"/>
    </location>
</feature>
<protein>
    <recommendedName>
        <fullName>Larval cuticle protein LCP-14</fullName>
    </recommendedName>
</protein>
<organism>
    <name type="scientific">Manduca sexta</name>
    <name type="common">Tobacco hawkmoth</name>
    <name type="synonym">Tobacco hornworm</name>
    <dbReference type="NCBI Taxonomy" id="7130"/>
    <lineage>
        <taxon>Eukaryota</taxon>
        <taxon>Metazoa</taxon>
        <taxon>Ecdysozoa</taxon>
        <taxon>Arthropoda</taxon>
        <taxon>Hexapoda</taxon>
        <taxon>Insecta</taxon>
        <taxon>Pterygota</taxon>
        <taxon>Neoptera</taxon>
        <taxon>Endopterygota</taxon>
        <taxon>Lepidoptera</taxon>
        <taxon>Glossata</taxon>
        <taxon>Ditrysia</taxon>
        <taxon>Bombycoidea</taxon>
        <taxon>Sphingidae</taxon>
        <taxon>Sphinginae</taxon>
        <taxon>Sphingini</taxon>
        <taxon>Manduca</taxon>
    </lineage>
</organism>
<reference key="1">
    <citation type="journal article" date="1988" name="J. Mol. Biol.">
        <title>Structure and expression of a Manduca sexta larval cuticle gene homologous to Drosophila cuticle genes.</title>
        <authorList>
            <person name="Rebers J.E."/>
            <person name="Riddiford L.M."/>
        </authorList>
    </citation>
    <scope>NUCLEOTIDE SEQUENCE [GENOMIC DNA / MRNA]</scope>
    <source>
        <tissue>Dorsal-abdominal integument</tissue>
    </source>
</reference>